<accession>Q12WD5</accession>
<proteinExistence type="inferred from homology"/>
<comment type="catalytic activity">
    <reaction>
        <text>an acyl phosphate + H2O = a carboxylate + phosphate + H(+)</text>
        <dbReference type="Rhea" id="RHEA:14965"/>
        <dbReference type="ChEBI" id="CHEBI:15377"/>
        <dbReference type="ChEBI" id="CHEBI:15378"/>
        <dbReference type="ChEBI" id="CHEBI:29067"/>
        <dbReference type="ChEBI" id="CHEBI:43474"/>
        <dbReference type="ChEBI" id="CHEBI:59918"/>
        <dbReference type="EC" id="3.6.1.7"/>
    </reaction>
</comment>
<comment type="similarity">
    <text evidence="2">Belongs to the acylphosphatase family.</text>
</comment>
<evidence type="ECO:0000255" key="1">
    <source>
        <dbReference type="PROSITE-ProRule" id="PRU00520"/>
    </source>
</evidence>
<evidence type="ECO:0000305" key="2"/>
<sequence length="96" mass="10621">MNTTDDVSCAEIYVSGRVQGVYFRGFTQKTATSLGLMGYAQNLPDGRVKVVAQGKRSCISELLDHLHIGPELSNVECIEVGWMGLSDTFTDFFIKR</sequence>
<reference key="1">
    <citation type="journal article" date="2009" name="ISME J.">
        <title>The genome sequence of the psychrophilic archaeon, Methanococcoides burtonii: the role of genome evolution in cold adaptation.</title>
        <authorList>
            <person name="Allen M.A."/>
            <person name="Lauro F.M."/>
            <person name="Williams T.J."/>
            <person name="Burg D."/>
            <person name="Siddiqui K.S."/>
            <person name="De Francisci D."/>
            <person name="Chong K.W."/>
            <person name="Pilak O."/>
            <person name="Chew H.H."/>
            <person name="De Maere M.Z."/>
            <person name="Ting L."/>
            <person name="Katrib M."/>
            <person name="Ng C."/>
            <person name="Sowers K.R."/>
            <person name="Galperin M.Y."/>
            <person name="Anderson I.J."/>
            <person name="Ivanova N."/>
            <person name="Dalin E."/>
            <person name="Martinez M."/>
            <person name="Lapidus A."/>
            <person name="Hauser L."/>
            <person name="Land M."/>
            <person name="Thomas T."/>
            <person name="Cavicchioli R."/>
        </authorList>
    </citation>
    <scope>NUCLEOTIDE SEQUENCE [LARGE SCALE GENOMIC DNA]</scope>
    <source>
        <strain>DSM 6242 / NBRC 107633 / OCM 468 / ACE-M</strain>
    </source>
</reference>
<protein>
    <recommendedName>
        <fullName>Acylphosphatase</fullName>
        <ecNumber>3.6.1.7</ecNumber>
    </recommendedName>
    <alternativeName>
        <fullName>Acylphosphate phosphohydrolase</fullName>
    </alternativeName>
</protein>
<keyword id="KW-0378">Hydrolase</keyword>
<gene>
    <name type="primary">acyP</name>
    <name type="ordered locus">Mbur_1323</name>
</gene>
<name>ACYP_METBU</name>
<dbReference type="EC" id="3.6.1.7"/>
<dbReference type="EMBL" id="CP000300">
    <property type="protein sequence ID" value="ABE52241.1"/>
    <property type="molecule type" value="Genomic_DNA"/>
</dbReference>
<dbReference type="RefSeq" id="WP_011499386.1">
    <property type="nucleotide sequence ID" value="NC_007955.1"/>
</dbReference>
<dbReference type="SMR" id="Q12WD5"/>
<dbReference type="STRING" id="259564.Mbur_1323"/>
<dbReference type="GeneID" id="3998612"/>
<dbReference type="KEGG" id="mbu:Mbur_1323"/>
<dbReference type="HOGENOM" id="CLU_141932_2_1_2"/>
<dbReference type="OrthoDB" id="6643at2157"/>
<dbReference type="Proteomes" id="UP000001979">
    <property type="component" value="Chromosome"/>
</dbReference>
<dbReference type="GO" id="GO:0003998">
    <property type="term" value="F:acylphosphatase activity"/>
    <property type="evidence" value="ECO:0007669"/>
    <property type="project" value="UniProtKB-EC"/>
</dbReference>
<dbReference type="Gene3D" id="3.30.70.100">
    <property type="match status" value="1"/>
</dbReference>
<dbReference type="InterPro" id="IPR020456">
    <property type="entry name" value="Acylphosphatase"/>
</dbReference>
<dbReference type="InterPro" id="IPR001792">
    <property type="entry name" value="Acylphosphatase-like_dom"/>
</dbReference>
<dbReference type="InterPro" id="IPR036046">
    <property type="entry name" value="Acylphosphatase-like_dom_sf"/>
</dbReference>
<dbReference type="InterPro" id="IPR017968">
    <property type="entry name" value="Acylphosphatase_CS"/>
</dbReference>
<dbReference type="PANTHER" id="PTHR47268">
    <property type="entry name" value="ACYLPHOSPHATASE"/>
    <property type="match status" value="1"/>
</dbReference>
<dbReference type="PANTHER" id="PTHR47268:SF4">
    <property type="entry name" value="ACYLPHOSPHATASE"/>
    <property type="match status" value="1"/>
</dbReference>
<dbReference type="Pfam" id="PF00708">
    <property type="entry name" value="Acylphosphatase"/>
    <property type="match status" value="1"/>
</dbReference>
<dbReference type="SUPFAM" id="SSF54975">
    <property type="entry name" value="Acylphosphatase/BLUF domain-like"/>
    <property type="match status" value="1"/>
</dbReference>
<dbReference type="PROSITE" id="PS00150">
    <property type="entry name" value="ACYLPHOSPHATASE_1"/>
    <property type="match status" value="1"/>
</dbReference>
<dbReference type="PROSITE" id="PS00151">
    <property type="entry name" value="ACYLPHOSPHATASE_2"/>
    <property type="match status" value="1"/>
</dbReference>
<dbReference type="PROSITE" id="PS51160">
    <property type="entry name" value="ACYLPHOSPHATASE_3"/>
    <property type="match status" value="1"/>
</dbReference>
<feature type="chain" id="PRO_0000326860" description="Acylphosphatase">
    <location>
        <begin position="1"/>
        <end position="96"/>
    </location>
</feature>
<feature type="domain" description="Acylphosphatase-like" evidence="1">
    <location>
        <begin position="9"/>
        <end position="96"/>
    </location>
</feature>
<feature type="active site" evidence="1">
    <location>
        <position position="24"/>
    </location>
</feature>
<feature type="active site" evidence="1">
    <location>
        <position position="42"/>
    </location>
</feature>
<organism>
    <name type="scientific">Methanococcoides burtonii (strain DSM 6242 / NBRC 107633 / OCM 468 / ACE-M)</name>
    <dbReference type="NCBI Taxonomy" id="259564"/>
    <lineage>
        <taxon>Archaea</taxon>
        <taxon>Methanobacteriati</taxon>
        <taxon>Methanobacteriota</taxon>
        <taxon>Stenosarchaea group</taxon>
        <taxon>Methanomicrobia</taxon>
        <taxon>Methanosarcinales</taxon>
        <taxon>Methanosarcinaceae</taxon>
        <taxon>Methanococcoides</taxon>
    </lineage>
</organism>